<accession>B6DCT1</accession>
<protein>
    <recommendedName>
        <fullName>U3-lycotoxin-Ls1r</fullName>
    </recommendedName>
    <alternativeName>
        <fullName>Toxin-like structure LSTX-B36</fullName>
    </alternativeName>
</protein>
<evidence type="ECO:0000250" key="1"/>
<evidence type="ECO:0000255" key="2"/>
<evidence type="ECO:0000305" key="3"/>
<name>TX336_LYCSI</name>
<sequence length="115" mass="13259">MKFVLLFGVLLVTLFSYSSAEMLDDFHQADEDELVSLIKKEEARAKECTPRFYDCSHDRHICCRSELFKDVCTCFYPEGGDNEVCTCQQPKHLKYMEKAAGKAKKFGGKIKKWFG</sequence>
<reference key="1">
    <citation type="journal article" date="2010" name="Zoology">
        <title>Transcriptome analysis of the venom glands of the Chinese wolf spider Lycosa singoriensis.</title>
        <authorList>
            <person name="Zhang Y."/>
            <person name="Chen J."/>
            <person name="Tang X."/>
            <person name="Wang F."/>
            <person name="Jiang L."/>
            <person name="Xiong X."/>
            <person name="Wang M."/>
            <person name="Rong M."/>
            <person name="Liu Z."/>
            <person name="Liang S."/>
        </authorList>
    </citation>
    <scope>NUCLEOTIDE SEQUENCE [LARGE SCALE MRNA]</scope>
    <source>
        <tissue>Venom gland</tissue>
    </source>
</reference>
<keyword id="KW-1015">Disulfide bond</keyword>
<keyword id="KW-0960">Knottin</keyword>
<keyword id="KW-0964">Secreted</keyword>
<keyword id="KW-0732">Signal</keyword>
<keyword id="KW-0800">Toxin</keyword>
<organism>
    <name type="scientific">Lycosa singoriensis</name>
    <name type="common">Wolf spider</name>
    <name type="synonym">Aranea singoriensis</name>
    <dbReference type="NCBI Taxonomy" id="434756"/>
    <lineage>
        <taxon>Eukaryota</taxon>
        <taxon>Metazoa</taxon>
        <taxon>Ecdysozoa</taxon>
        <taxon>Arthropoda</taxon>
        <taxon>Chelicerata</taxon>
        <taxon>Arachnida</taxon>
        <taxon>Araneae</taxon>
        <taxon>Araneomorphae</taxon>
        <taxon>Entelegynae</taxon>
        <taxon>Lycosoidea</taxon>
        <taxon>Lycosidae</taxon>
        <taxon>Lycosa</taxon>
    </lineage>
</organism>
<proteinExistence type="evidence at transcript level"/>
<comment type="subcellular location">
    <subcellularLocation>
        <location evidence="1">Secreted</location>
    </subcellularLocation>
</comment>
<comment type="tissue specificity">
    <text>Expressed by the venom gland.</text>
</comment>
<comment type="domain">
    <text evidence="1">The presence of a 'disulfide through disulfide knot' structurally defines this protein as a knottin.</text>
</comment>
<comment type="similarity">
    <text evidence="3">Belongs to the neurotoxin 19 (CSTX) family. 01 subfamily.</text>
</comment>
<feature type="signal peptide" evidence="2">
    <location>
        <begin position="1"/>
        <end position="20"/>
    </location>
</feature>
<feature type="propeptide" id="PRO_0000401675" evidence="1">
    <location>
        <begin position="21"/>
        <end position="44"/>
    </location>
</feature>
<feature type="chain" id="PRO_0000401676" description="U3-lycotoxin-Ls1r">
    <location>
        <begin position="45"/>
        <end position="115"/>
    </location>
</feature>
<feature type="disulfide bond" evidence="1">
    <location>
        <begin position="48"/>
        <end position="63"/>
    </location>
</feature>
<feature type="disulfide bond" evidence="1">
    <location>
        <begin position="55"/>
        <end position="72"/>
    </location>
</feature>
<feature type="disulfide bond" evidence="1">
    <location>
        <begin position="62"/>
        <end position="87"/>
    </location>
</feature>
<feature type="disulfide bond" evidence="1">
    <location>
        <begin position="74"/>
        <end position="85"/>
    </location>
</feature>
<dbReference type="EMBL" id="EU926015">
    <property type="protein sequence ID" value="ACI41347.1"/>
    <property type="molecule type" value="mRNA"/>
</dbReference>
<dbReference type="EMBL" id="FM864019">
    <property type="protein sequence ID" value="CAS03617.1"/>
    <property type="molecule type" value="mRNA"/>
</dbReference>
<dbReference type="SMR" id="B6DCT1"/>
<dbReference type="ArachnoServer" id="AS000964">
    <property type="toxin name" value="U3-lycotoxin-Ls1r"/>
</dbReference>
<dbReference type="GO" id="GO:0005576">
    <property type="term" value="C:extracellular region"/>
    <property type="evidence" value="ECO:0007669"/>
    <property type="project" value="UniProtKB-SubCell"/>
</dbReference>
<dbReference type="GO" id="GO:0090729">
    <property type="term" value="F:toxin activity"/>
    <property type="evidence" value="ECO:0007669"/>
    <property type="project" value="UniProtKB-KW"/>
</dbReference>
<dbReference type="InterPro" id="IPR011142">
    <property type="entry name" value="Spider_toxin_CSTX_Knottin_CS"/>
</dbReference>
<dbReference type="PROSITE" id="PS60029">
    <property type="entry name" value="SPIDER_CSTX"/>
    <property type="match status" value="1"/>
</dbReference>